<feature type="chain" id="PRO_1000119558" description="Probable molybdenum cofactor guanylyltransferase">
    <location>
        <begin position="1"/>
        <end position="200"/>
    </location>
</feature>
<feature type="binding site" evidence="1">
    <location>
        <begin position="9"/>
        <end position="11"/>
    </location>
    <ligand>
        <name>GTP</name>
        <dbReference type="ChEBI" id="CHEBI:37565"/>
    </ligand>
</feature>
<feature type="binding site" evidence="1">
    <location>
        <position position="21"/>
    </location>
    <ligand>
        <name>GTP</name>
        <dbReference type="ChEBI" id="CHEBI:37565"/>
    </ligand>
</feature>
<feature type="binding site" evidence="1">
    <location>
        <position position="69"/>
    </location>
    <ligand>
        <name>GTP</name>
        <dbReference type="ChEBI" id="CHEBI:37565"/>
    </ligand>
</feature>
<feature type="binding site" evidence="1">
    <location>
        <position position="100"/>
    </location>
    <ligand>
        <name>GTP</name>
        <dbReference type="ChEBI" id="CHEBI:37565"/>
    </ligand>
</feature>
<feature type="binding site" evidence="1">
    <location>
        <position position="100"/>
    </location>
    <ligand>
        <name>Mg(2+)</name>
        <dbReference type="ChEBI" id="CHEBI:18420"/>
    </ligand>
</feature>
<sequence>MSKYAGIVLAGGMSSRFGEPKALASWQGSTFIEHILKVMTSTLQEVVVISHSHIKERVEKLVQVPVIEDIPHYKGNGPLAGIVSGMEYIEADWYAIMPCDAPNVSHEWFTILLEQTSNEYDAVVPIINGRKQPLLAAYHNRVKEKIYTLLQEEKRSMGQLLSQCNVKYIAGEDIQANADWFINVNTKEEYVQAQKDLSNE</sequence>
<proteinExistence type="inferred from homology"/>
<reference key="1">
    <citation type="submission" date="2008-10" db="EMBL/GenBank/DDBJ databases">
        <title>Genome sequence of Bacillus cereus AH187.</title>
        <authorList>
            <person name="Dodson R.J."/>
            <person name="Durkin A.S."/>
            <person name="Rosovitz M.J."/>
            <person name="Rasko D.A."/>
            <person name="Kolsto A.B."/>
            <person name="Okstad O.A."/>
            <person name="Ravel J."/>
            <person name="Sutton G."/>
        </authorList>
    </citation>
    <scope>NUCLEOTIDE SEQUENCE [LARGE SCALE GENOMIC DNA]</scope>
    <source>
        <strain>AH187</strain>
    </source>
</reference>
<comment type="function">
    <text evidence="1">Transfers a GMP moiety from GTP to Mo-molybdopterin (Mo-MPT) cofactor (Moco or molybdenum cofactor) to form Mo-molybdopterin guanine dinucleotide (Mo-MGD) cofactor.</text>
</comment>
<comment type="catalytic activity">
    <reaction evidence="1">
        <text>Mo-molybdopterin + GTP + H(+) = Mo-molybdopterin guanine dinucleotide + diphosphate</text>
        <dbReference type="Rhea" id="RHEA:34243"/>
        <dbReference type="ChEBI" id="CHEBI:15378"/>
        <dbReference type="ChEBI" id="CHEBI:33019"/>
        <dbReference type="ChEBI" id="CHEBI:37565"/>
        <dbReference type="ChEBI" id="CHEBI:71302"/>
        <dbReference type="ChEBI" id="CHEBI:71310"/>
        <dbReference type="EC" id="2.7.7.77"/>
    </reaction>
</comment>
<comment type="cofactor">
    <cofactor evidence="1">
        <name>Mg(2+)</name>
        <dbReference type="ChEBI" id="CHEBI:18420"/>
    </cofactor>
</comment>
<comment type="subcellular location">
    <subcellularLocation>
        <location evidence="1">Cytoplasm</location>
    </subcellularLocation>
</comment>
<comment type="domain">
    <text evidence="1">The N-terminal domain determines nucleotide recognition and specific binding, while the C-terminal domain determines the specific binding to the target protein.</text>
</comment>
<comment type="similarity">
    <text evidence="1">Belongs to the MobA family.</text>
</comment>
<dbReference type="EC" id="2.7.7.77" evidence="1"/>
<dbReference type="EMBL" id="CP001177">
    <property type="protein sequence ID" value="ACJ81259.1"/>
    <property type="molecule type" value="Genomic_DNA"/>
</dbReference>
<dbReference type="SMR" id="B7HSV1"/>
<dbReference type="KEGG" id="bcr:BCAH187_A4899"/>
<dbReference type="HOGENOM" id="CLU_055597_2_0_9"/>
<dbReference type="Proteomes" id="UP000002214">
    <property type="component" value="Chromosome"/>
</dbReference>
<dbReference type="GO" id="GO:0005737">
    <property type="term" value="C:cytoplasm"/>
    <property type="evidence" value="ECO:0007669"/>
    <property type="project" value="UniProtKB-SubCell"/>
</dbReference>
<dbReference type="GO" id="GO:0005525">
    <property type="term" value="F:GTP binding"/>
    <property type="evidence" value="ECO:0007669"/>
    <property type="project" value="UniProtKB-UniRule"/>
</dbReference>
<dbReference type="GO" id="GO:0046872">
    <property type="term" value="F:metal ion binding"/>
    <property type="evidence" value="ECO:0007669"/>
    <property type="project" value="UniProtKB-KW"/>
</dbReference>
<dbReference type="GO" id="GO:0061603">
    <property type="term" value="F:molybdenum cofactor guanylyltransferase activity"/>
    <property type="evidence" value="ECO:0007669"/>
    <property type="project" value="UniProtKB-EC"/>
</dbReference>
<dbReference type="GO" id="GO:0006777">
    <property type="term" value="P:Mo-molybdopterin cofactor biosynthetic process"/>
    <property type="evidence" value="ECO:0007669"/>
    <property type="project" value="UniProtKB-KW"/>
</dbReference>
<dbReference type="CDD" id="cd02503">
    <property type="entry name" value="MobA"/>
    <property type="match status" value="1"/>
</dbReference>
<dbReference type="FunFam" id="3.90.550.10:FF:000121">
    <property type="entry name" value="Probable molybdenum cofactor guanylyltransferase"/>
    <property type="match status" value="1"/>
</dbReference>
<dbReference type="Gene3D" id="3.90.550.10">
    <property type="entry name" value="Spore Coat Polysaccharide Biosynthesis Protein SpsA, Chain A"/>
    <property type="match status" value="1"/>
</dbReference>
<dbReference type="HAMAP" id="MF_00316">
    <property type="entry name" value="MobA"/>
    <property type="match status" value="1"/>
</dbReference>
<dbReference type="InterPro" id="IPR025877">
    <property type="entry name" value="MobA-like_NTP_Trfase"/>
</dbReference>
<dbReference type="InterPro" id="IPR013482">
    <property type="entry name" value="Molybde_CF_guanTrfase"/>
</dbReference>
<dbReference type="InterPro" id="IPR029044">
    <property type="entry name" value="Nucleotide-diphossugar_trans"/>
</dbReference>
<dbReference type="PANTHER" id="PTHR19136">
    <property type="entry name" value="MOLYBDENUM COFACTOR GUANYLYLTRANSFERASE"/>
    <property type="match status" value="1"/>
</dbReference>
<dbReference type="PANTHER" id="PTHR19136:SF81">
    <property type="entry name" value="MOLYBDENUM COFACTOR GUANYLYLTRANSFERASE"/>
    <property type="match status" value="1"/>
</dbReference>
<dbReference type="Pfam" id="PF12804">
    <property type="entry name" value="NTP_transf_3"/>
    <property type="match status" value="1"/>
</dbReference>
<dbReference type="SUPFAM" id="SSF53448">
    <property type="entry name" value="Nucleotide-diphospho-sugar transferases"/>
    <property type="match status" value="1"/>
</dbReference>
<gene>
    <name evidence="1" type="primary">mobA</name>
    <name type="ordered locus">BCAH187_A4899</name>
</gene>
<evidence type="ECO:0000255" key="1">
    <source>
        <dbReference type="HAMAP-Rule" id="MF_00316"/>
    </source>
</evidence>
<name>MOBA_BACC7</name>
<organism>
    <name type="scientific">Bacillus cereus (strain AH187)</name>
    <dbReference type="NCBI Taxonomy" id="405534"/>
    <lineage>
        <taxon>Bacteria</taxon>
        <taxon>Bacillati</taxon>
        <taxon>Bacillota</taxon>
        <taxon>Bacilli</taxon>
        <taxon>Bacillales</taxon>
        <taxon>Bacillaceae</taxon>
        <taxon>Bacillus</taxon>
        <taxon>Bacillus cereus group</taxon>
    </lineage>
</organism>
<accession>B7HSV1</accession>
<protein>
    <recommendedName>
        <fullName evidence="1">Probable molybdenum cofactor guanylyltransferase</fullName>
        <shortName evidence="1">MoCo guanylyltransferase</shortName>
        <ecNumber evidence="1">2.7.7.77</ecNumber>
    </recommendedName>
    <alternativeName>
        <fullName evidence="1">GTP:molybdopterin guanylyltransferase</fullName>
    </alternativeName>
    <alternativeName>
        <fullName evidence="1">Mo-MPT guanylyltransferase</fullName>
    </alternativeName>
    <alternativeName>
        <fullName evidence="1">Molybdopterin guanylyltransferase</fullName>
    </alternativeName>
    <alternativeName>
        <fullName evidence="1">Molybdopterin-guanine dinucleotide synthase</fullName>
        <shortName evidence="1">MGD synthase</shortName>
    </alternativeName>
</protein>
<keyword id="KW-0963">Cytoplasm</keyword>
<keyword id="KW-0342">GTP-binding</keyword>
<keyword id="KW-0460">Magnesium</keyword>
<keyword id="KW-0479">Metal-binding</keyword>
<keyword id="KW-0501">Molybdenum cofactor biosynthesis</keyword>
<keyword id="KW-0547">Nucleotide-binding</keyword>
<keyword id="KW-0808">Transferase</keyword>